<keyword id="KW-0131">Cell cycle</keyword>
<keyword id="KW-0132">Cell division</keyword>
<keyword id="KW-0966">Cell projection</keyword>
<keyword id="KW-0969">Cilium</keyword>
<keyword id="KW-0970">Cilium biogenesis/degradation</keyword>
<keyword id="KW-0175">Coiled coil</keyword>
<keyword id="KW-0963">Cytoplasm</keyword>
<keyword id="KW-0206">Cytoskeleton</keyword>
<keyword id="KW-1015">Disulfide bond</keyword>
<keyword id="KW-0493">Microtubule</keyword>
<keyword id="KW-1185">Reference proteome</keyword>
<accession>F1PZQ5</accession>
<accession>D0R7H6</accession>
<feature type="chain" id="PRO_0000444602" description="Coiled-coil domain-containing protein 66">
    <location>
        <begin position="1"/>
        <end position="919"/>
    </location>
</feature>
<feature type="region of interest" description="Disordered" evidence="4">
    <location>
        <begin position="145"/>
        <end position="166"/>
    </location>
</feature>
<feature type="region of interest" description="Disordered" evidence="4">
    <location>
        <begin position="456"/>
        <end position="505"/>
    </location>
</feature>
<feature type="region of interest" description="Mediates localization to cilia, centrosomes and spindle microtubules and the interaction with PCM1, CEP290, CEP104 and CSPP1" evidence="1">
    <location>
        <begin position="570"/>
        <end position="919"/>
    </location>
</feature>
<feature type="region of interest" description="Disordered" evidence="4">
    <location>
        <begin position="724"/>
        <end position="744"/>
    </location>
</feature>
<feature type="region of interest" description="Disordered" evidence="4">
    <location>
        <begin position="762"/>
        <end position="816"/>
    </location>
</feature>
<feature type="coiled-coil region" evidence="3">
    <location>
        <begin position="467"/>
        <end position="558"/>
    </location>
</feature>
<feature type="compositionally biased region" description="Polar residues" evidence="4">
    <location>
        <begin position="150"/>
        <end position="161"/>
    </location>
</feature>
<feature type="sequence conflict" description="In Ref. 1; CBA13041." evidence="6" ref="1">
    <original>G</original>
    <variation>GV</variation>
    <location>
        <position position="169"/>
    </location>
</feature>
<feature type="sequence conflict" description="In Ref. 1; CBA13041." evidence="6" ref="1">
    <original>KKKN</original>
    <variation>E</variation>
    <location>
        <begin position="770"/>
        <end position="773"/>
    </location>
</feature>
<comment type="function">
    <text evidence="1 5">Microtubule-binding protein required for ciliogenesis. May function in ciliogenesis by mediating the transport of proteins like BBS4 to the cilium, but also through the organization of the centriolar satellites. Required for the assembly of signaling-competent cilia with proper structure and length. Mediates this function in part by regulating transition zone assembly and basal body recruitment of the IFT-B complex. Cooperates with the ciliopathy proteins CSPP1 and CEP104 during cilium length regulation. Plays two important roles during cell division. First, is required for mitotic progression via regulation of spindle assembly, organization and orientation, levels of spindle microtubules (MTs), kinetochore-fiber integrity, and chromosome alignment. Second, functions during cytokinesis in part by regulating assembly and organization of central spindle and midbody MTs (By similarity). Plays a role in retina morphogenesis and/or homeostasis (PubMed:19777273).</text>
</comment>
<comment type="subunit">
    <text evidence="1 2">Homodimer; disulfide-linked (By similarity). Interacts with CEP290 (By similarity). Interacts with PCM1 (By similarity). Interacts with ARMC9, TOGARAM1, CSPP1 and CEP104 (By similarity). Interacts with CDK5RAP2, CEP152, CEP192, TBG1 and PRC1 (By similarity).</text>
</comment>
<comment type="subcellular location">
    <subcellularLocation>
        <location evidence="1">Cytoplasm</location>
        <location evidence="1">Cytoskeleton</location>
        <location evidence="1">Microtubule organizing center</location>
        <location evidence="1">Centrosome</location>
    </subcellularLocation>
    <subcellularLocation>
        <location evidence="1">Cytoplasm</location>
        <location evidence="1">Cytoskeleton</location>
        <location evidence="1">Microtubule organizing center</location>
        <location evidence="1">Centrosome</location>
        <location evidence="1">Centriolar satellite</location>
    </subcellularLocation>
    <subcellularLocation>
        <location evidence="1">Cell projection</location>
        <location evidence="1">Cilium</location>
    </subcellularLocation>
    <subcellularLocation>
        <location evidence="1">Cytoplasm</location>
        <location evidence="1">Cytoskeleton</location>
        <location evidence="1">Cilium basal body</location>
    </subcellularLocation>
    <subcellularLocation>
        <location evidence="1">Cytoplasm</location>
        <location evidence="1">Cytoskeleton</location>
        <location evidence="1">Cilium axoneme</location>
    </subcellularLocation>
    <subcellularLocation>
        <location evidence="5">Photoreceptor inner segment</location>
    </subcellularLocation>
    <subcellularLocation>
        <location evidence="5">Cell projection</location>
        <location evidence="5">Cilium</location>
        <location evidence="5">Photoreceptor outer segment</location>
    </subcellularLocation>
    <text evidence="1 5">Restricted to the centrosomes and the spindle microtubules during mitosis (By similarity). Enriched in the inner segment of the photoreceptor (PubMed:19777273).</text>
</comment>
<comment type="tissue specificity">
    <text evidence="5">Expressed in retina and blood (PubMed:19777273). Expressed in retina, mainly in photoreceptors but also in outer plexiform and ganglion cell layers (at protein level) (PubMed:19777273).</text>
</comment>
<comment type="disease">
    <text evidence="5">Defects in CCDC66 are the cause of generalized progressive retinal atrophy (gPRA), characterized by continuous degeneration of photoreceptor cells leading to night blindness and progressive vision loss. A homozygous mutation in the CCDC66 gene resulting in a frameshift and the production of a truncated protein is probably causing the disease.</text>
</comment>
<reference key="1">
    <citation type="journal article" date="2010" name="Neurogenetics">
        <title>Progressive retinal atrophy in Schapendoes dogs: mutation of the newly identified CCDC66 gene.</title>
        <authorList>
            <person name="Dekomien G."/>
            <person name="Vollrath C."/>
            <person name="Petrasch-Parwez E."/>
            <person name="Boeve M.H."/>
            <person name="Akkad D.A."/>
            <person name="Gerding W.M."/>
            <person name="Epplen J.T."/>
        </authorList>
    </citation>
    <scope>NUCLEOTIDE SEQUENCE [MRNA]</scope>
    <scope>FUNCTION</scope>
    <scope>SUBCELLULAR LOCATION</scope>
    <scope>TISSUE SPECIFICITY</scope>
    <scope>INVOLVEMENT IN PROGRESSIVE RETINAL ATROPHY</scope>
    <source>
        <tissue>Retina</tissue>
    </source>
</reference>
<reference key="2">
    <citation type="journal article" date="2005" name="Nature">
        <title>Genome sequence, comparative analysis and haplotype structure of the domestic dog.</title>
        <authorList>
            <person name="Lindblad-Toh K."/>
            <person name="Wade C.M."/>
            <person name="Mikkelsen T.S."/>
            <person name="Karlsson E.K."/>
            <person name="Jaffe D.B."/>
            <person name="Kamal M."/>
            <person name="Clamp M."/>
            <person name="Chang J.L."/>
            <person name="Kulbokas E.J. III"/>
            <person name="Zody M.C."/>
            <person name="Mauceli E."/>
            <person name="Xie X."/>
            <person name="Breen M."/>
            <person name="Wayne R.K."/>
            <person name="Ostrander E.A."/>
            <person name="Ponting C.P."/>
            <person name="Galibert F."/>
            <person name="Smith D.R."/>
            <person name="deJong P.J."/>
            <person name="Kirkness E.F."/>
            <person name="Alvarez P."/>
            <person name="Biagi T."/>
            <person name="Brockman W."/>
            <person name="Butler J."/>
            <person name="Chin C.-W."/>
            <person name="Cook A."/>
            <person name="Cuff J."/>
            <person name="Daly M.J."/>
            <person name="DeCaprio D."/>
            <person name="Gnerre S."/>
            <person name="Grabherr M."/>
            <person name="Kellis M."/>
            <person name="Kleber M."/>
            <person name="Bardeleben C."/>
            <person name="Goodstadt L."/>
            <person name="Heger A."/>
            <person name="Hitte C."/>
            <person name="Kim L."/>
            <person name="Koepfli K.-P."/>
            <person name="Parker H.G."/>
            <person name="Pollinger J.P."/>
            <person name="Searle S.M.J."/>
            <person name="Sutter N.B."/>
            <person name="Thomas R."/>
            <person name="Webber C."/>
            <person name="Baldwin J."/>
            <person name="Abebe A."/>
            <person name="Abouelleil A."/>
            <person name="Aftuck L."/>
            <person name="Ait-Zahra M."/>
            <person name="Aldredge T."/>
            <person name="Allen N."/>
            <person name="An P."/>
            <person name="Anderson S."/>
            <person name="Antoine C."/>
            <person name="Arachchi H."/>
            <person name="Aslam A."/>
            <person name="Ayotte L."/>
            <person name="Bachantsang P."/>
            <person name="Barry A."/>
            <person name="Bayul T."/>
            <person name="Benamara M."/>
            <person name="Berlin A."/>
            <person name="Bessette D."/>
            <person name="Blitshteyn B."/>
            <person name="Bloom T."/>
            <person name="Blye J."/>
            <person name="Boguslavskiy L."/>
            <person name="Bonnet C."/>
            <person name="Boukhgalter B."/>
            <person name="Brown A."/>
            <person name="Cahill P."/>
            <person name="Calixte N."/>
            <person name="Camarata J."/>
            <person name="Cheshatsang Y."/>
            <person name="Chu J."/>
            <person name="Citroen M."/>
            <person name="Collymore A."/>
            <person name="Cooke P."/>
            <person name="Dawoe T."/>
            <person name="Daza R."/>
            <person name="Decktor K."/>
            <person name="DeGray S."/>
            <person name="Dhargay N."/>
            <person name="Dooley K."/>
            <person name="Dooley K."/>
            <person name="Dorje P."/>
            <person name="Dorjee K."/>
            <person name="Dorris L."/>
            <person name="Duffey N."/>
            <person name="Dupes A."/>
            <person name="Egbiremolen O."/>
            <person name="Elong R."/>
            <person name="Falk J."/>
            <person name="Farina A."/>
            <person name="Faro S."/>
            <person name="Ferguson D."/>
            <person name="Ferreira P."/>
            <person name="Fisher S."/>
            <person name="FitzGerald M."/>
            <person name="Foley K."/>
            <person name="Foley C."/>
            <person name="Franke A."/>
            <person name="Friedrich D."/>
            <person name="Gage D."/>
            <person name="Garber M."/>
            <person name="Gearin G."/>
            <person name="Giannoukos G."/>
            <person name="Goode T."/>
            <person name="Goyette A."/>
            <person name="Graham J."/>
            <person name="Grandbois E."/>
            <person name="Gyaltsen K."/>
            <person name="Hafez N."/>
            <person name="Hagopian D."/>
            <person name="Hagos B."/>
            <person name="Hall J."/>
            <person name="Healy C."/>
            <person name="Hegarty R."/>
            <person name="Honan T."/>
            <person name="Horn A."/>
            <person name="Houde N."/>
            <person name="Hughes L."/>
            <person name="Hunnicutt L."/>
            <person name="Husby M."/>
            <person name="Jester B."/>
            <person name="Jones C."/>
            <person name="Kamat A."/>
            <person name="Kanga B."/>
            <person name="Kells C."/>
            <person name="Khazanovich D."/>
            <person name="Kieu A.C."/>
            <person name="Kisner P."/>
            <person name="Kumar M."/>
            <person name="Lance K."/>
            <person name="Landers T."/>
            <person name="Lara M."/>
            <person name="Lee W."/>
            <person name="Leger J.-P."/>
            <person name="Lennon N."/>
            <person name="Leuper L."/>
            <person name="LeVine S."/>
            <person name="Liu J."/>
            <person name="Liu X."/>
            <person name="Lokyitsang Y."/>
            <person name="Lokyitsang T."/>
            <person name="Lui A."/>
            <person name="Macdonald J."/>
            <person name="Major J."/>
            <person name="Marabella R."/>
            <person name="Maru K."/>
            <person name="Matthews C."/>
            <person name="McDonough S."/>
            <person name="Mehta T."/>
            <person name="Meldrim J."/>
            <person name="Melnikov A."/>
            <person name="Meneus L."/>
            <person name="Mihalev A."/>
            <person name="Mihova T."/>
            <person name="Miller K."/>
            <person name="Mittelman R."/>
            <person name="Mlenga V."/>
            <person name="Mulrain L."/>
            <person name="Munson G."/>
            <person name="Navidi A."/>
            <person name="Naylor J."/>
            <person name="Nguyen T."/>
            <person name="Nguyen N."/>
            <person name="Nguyen C."/>
            <person name="Nguyen T."/>
            <person name="Nicol R."/>
            <person name="Norbu N."/>
            <person name="Norbu C."/>
            <person name="Novod N."/>
            <person name="Nyima T."/>
            <person name="Olandt P."/>
            <person name="O'Neill B."/>
            <person name="O'Neill K."/>
            <person name="Osman S."/>
            <person name="Oyono L."/>
            <person name="Patti C."/>
            <person name="Perrin D."/>
            <person name="Phunkhang P."/>
            <person name="Pierre F."/>
            <person name="Priest M."/>
            <person name="Rachupka A."/>
            <person name="Raghuraman S."/>
            <person name="Rameau R."/>
            <person name="Ray V."/>
            <person name="Raymond C."/>
            <person name="Rege F."/>
            <person name="Rise C."/>
            <person name="Rogers J."/>
            <person name="Rogov P."/>
            <person name="Sahalie J."/>
            <person name="Settipalli S."/>
            <person name="Sharpe T."/>
            <person name="Shea T."/>
            <person name="Sheehan M."/>
            <person name="Sherpa N."/>
            <person name="Shi J."/>
            <person name="Shih D."/>
            <person name="Sloan J."/>
            <person name="Smith C."/>
            <person name="Sparrow T."/>
            <person name="Stalker J."/>
            <person name="Stange-Thomann N."/>
            <person name="Stavropoulos S."/>
            <person name="Stone C."/>
            <person name="Stone S."/>
            <person name="Sykes S."/>
            <person name="Tchuinga P."/>
            <person name="Tenzing P."/>
            <person name="Tesfaye S."/>
            <person name="Thoulutsang D."/>
            <person name="Thoulutsang Y."/>
            <person name="Topham K."/>
            <person name="Topping I."/>
            <person name="Tsamla T."/>
            <person name="Vassiliev H."/>
            <person name="Venkataraman V."/>
            <person name="Vo A."/>
            <person name="Wangchuk T."/>
            <person name="Wangdi T."/>
            <person name="Weiand M."/>
            <person name="Wilkinson J."/>
            <person name="Wilson A."/>
            <person name="Yadav S."/>
            <person name="Yang S."/>
            <person name="Yang X."/>
            <person name="Young G."/>
            <person name="Yu Q."/>
            <person name="Zainoun J."/>
            <person name="Zembek L."/>
            <person name="Zimmer A."/>
            <person name="Lander E.S."/>
        </authorList>
    </citation>
    <scope>NUCLEOTIDE SEQUENCE [LARGE SCALE GENOMIC DNA]</scope>
    <source>
        <strain>Boxer</strain>
    </source>
</reference>
<protein>
    <recommendedName>
        <fullName evidence="6">Coiled-coil domain-containing protein 66</fullName>
    </recommendedName>
</protein>
<gene>
    <name type="primary">CCDC66</name>
</gene>
<dbReference type="EMBL" id="FN433897">
    <property type="protein sequence ID" value="CBA13041.1"/>
    <property type="molecule type" value="mRNA"/>
</dbReference>
<dbReference type="EMBL" id="AAEX03012172">
    <property type="status" value="NOT_ANNOTATED_CDS"/>
    <property type="molecule type" value="Genomic_DNA"/>
</dbReference>
<dbReference type="EMBL" id="AAEX03012173">
    <property type="status" value="NOT_ANNOTATED_CDS"/>
    <property type="molecule type" value="Genomic_DNA"/>
</dbReference>
<dbReference type="RefSeq" id="NP_001161484.1">
    <property type="nucleotide sequence ID" value="NM_001168012.1"/>
</dbReference>
<dbReference type="SMR" id="F1PZQ5"/>
<dbReference type="FunCoup" id="F1PZQ5">
    <property type="interactions" value="766"/>
</dbReference>
<dbReference type="STRING" id="9615.ENSCAFP00000011951"/>
<dbReference type="PaxDb" id="9612-ENSCAFP00000011951"/>
<dbReference type="GeneID" id="476582"/>
<dbReference type="KEGG" id="cfa:476582"/>
<dbReference type="CTD" id="285331"/>
<dbReference type="eggNOG" id="ENOG502R1PQ">
    <property type="taxonomic scope" value="Eukaryota"/>
</dbReference>
<dbReference type="HOGENOM" id="CLU_016964_0_0_1"/>
<dbReference type="InParanoid" id="F1PZQ5"/>
<dbReference type="OMA" id="MKSNLVC"/>
<dbReference type="OrthoDB" id="10042846at2759"/>
<dbReference type="TreeFam" id="TF350489"/>
<dbReference type="Proteomes" id="UP000002254">
    <property type="component" value="Unplaced"/>
</dbReference>
<dbReference type="Proteomes" id="UP000694429">
    <property type="component" value="Unplaced"/>
</dbReference>
<dbReference type="Proteomes" id="UP000694542">
    <property type="component" value="Unplaced"/>
</dbReference>
<dbReference type="Proteomes" id="UP000805418">
    <property type="component" value="Unplaced"/>
</dbReference>
<dbReference type="GO" id="GO:0005930">
    <property type="term" value="C:axoneme"/>
    <property type="evidence" value="ECO:0000250"/>
    <property type="project" value="UniProtKB"/>
</dbReference>
<dbReference type="GO" id="GO:0034451">
    <property type="term" value="C:centriolar satellite"/>
    <property type="evidence" value="ECO:0000250"/>
    <property type="project" value="UniProtKB"/>
</dbReference>
<dbReference type="GO" id="GO:0005813">
    <property type="term" value="C:centrosome"/>
    <property type="evidence" value="ECO:0000250"/>
    <property type="project" value="UniProtKB"/>
</dbReference>
<dbReference type="GO" id="GO:0036064">
    <property type="term" value="C:ciliary basal body"/>
    <property type="evidence" value="ECO:0000250"/>
    <property type="project" value="UniProtKB"/>
</dbReference>
<dbReference type="GO" id="GO:0005929">
    <property type="term" value="C:cilium"/>
    <property type="evidence" value="ECO:0000250"/>
    <property type="project" value="UniProtKB"/>
</dbReference>
<dbReference type="GO" id="GO:0005874">
    <property type="term" value="C:microtubule"/>
    <property type="evidence" value="ECO:0000250"/>
    <property type="project" value="UniProtKB"/>
</dbReference>
<dbReference type="GO" id="GO:0030496">
    <property type="term" value="C:midbody"/>
    <property type="evidence" value="ECO:0000250"/>
    <property type="project" value="UniProtKB"/>
</dbReference>
<dbReference type="GO" id="GO:0001917">
    <property type="term" value="C:photoreceptor inner segment"/>
    <property type="evidence" value="ECO:0000314"/>
    <property type="project" value="UniProtKB"/>
</dbReference>
<dbReference type="GO" id="GO:0001750">
    <property type="term" value="C:photoreceptor outer segment"/>
    <property type="evidence" value="ECO:0007669"/>
    <property type="project" value="UniProtKB-SubCell"/>
</dbReference>
<dbReference type="GO" id="GO:0005819">
    <property type="term" value="C:spindle"/>
    <property type="evidence" value="ECO:0000250"/>
    <property type="project" value="UniProtKB"/>
</dbReference>
<dbReference type="GO" id="GO:0008017">
    <property type="term" value="F:microtubule binding"/>
    <property type="evidence" value="ECO:0000250"/>
    <property type="project" value="UniProtKB"/>
</dbReference>
<dbReference type="GO" id="GO:0042803">
    <property type="term" value="F:protein homodimerization activity"/>
    <property type="evidence" value="ECO:0000250"/>
    <property type="project" value="UniProtKB"/>
</dbReference>
<dbReference type="GO" id="GO:0051301">
    <property type="term" value="P:cell division"/>
    <property type="evidence" value="ECO:0007669"/>
    <property type="project" value="UniProtKB-KW"/>
</dbReference>
<dbReference type="GO" id="GO:1905349">
    <property type="term" value="P:ciliary transition zone assembly"/>
    <property type="evidence" value="ECO:0000250"/>
    <property type="project" value="UniProtKB"/>
</dbReference>
<dbReference type="GO" id="GO:0060271">
    <property type="term" value="P:cilium assembly"/>
    <property type="evidence" value="ECO:0000250"/>
    <property type="project" value="UniProtKB"/>
</dbReference>
<dbReference type="GO" id="GO:0000132">
    <property type="term" value="P:establishment of mitotic spindle orientation"/>
    <property type="evidence" value="ECO:0000250"/>
    <property type="project" value="UniProtKB"/>
</dbReference>
<dbReference type="GO" id="GO:0001578">
    <property type="term" value="P:microtubule bundle formation"/>
    <property type="evidence" value="ECO:0000250"/>
    <property type="project" value="UniProtKB"/>
</dbReference>
<dbReference type="GO" id="GO:1902850">
    <property type="term" value="P:microtubule cytoskeleton organization involved in mitosis"/>
    <property type="evidence" value="ECO:0000250"/>
    <property type="project" value="UniProtKB"/>
</dbReference>
<dbReference type="GO" id="GO:0007020">
    <property type="term" value="P:microtubule nucleation"/>
    <property type="evidence" value="ECO:0000250"/>
    <property type="project" value="UniProtKB"/>
</dbReference>
<dbReference type="GO" id="GO:0007080">
    <property type="term" value="P:mitotic metaphase chromosome alignment"/>
    <property type="evidence" value="ECO:0000250"/>
    <property type="project" value="UniProtKB"/>
</dbReference>
<dbReference type="GO" id="GO:0090307">
    <property type="term" value="P:mitotic spindle assembly"/>
    <property type="evidence" value="ECO:0000250"/>
    <property type="project" value="UniProtKB"/>
</dbReference>
<dbReference type="GO" id="GO:0007052">
    <property type="term" value="P:mitotic spindle organization"/>
    <property type="evidence" value="ECO:0000250"/>
    <property type="project" value="UniProtKB"/>
</dbReference>
<dbReference type="GO" id="GO:0032465">
    <property type="term" value="P:regulation of cytokinesis"/>
    <property type="evidence" value="ECO:0000250"/>
    <property type="project" value="UniProtKB"/>
</dbReference>
<dbReference type="GO" id="GO:1903564">
    <property type="term" value="P:regulation of protein localization to cilium"/>
    <property type="evidence" value="ECO:0000250"/>
    <property type="project" value="UniProtKB"/>
</dbReference>
<dbReference type="GO" id="GO:0001895">
    <property type="term" value="P:retina homeostasis"/>
    <property type="evidence" value="ECO:0000315"/>
    <property type="project" value="UniProtKB"/>
</dbReference>
<dbReference type="InterPro" id="IPR039183">
    <property type="entry name" value="CCD66"/>
</dbReference>
<dbReference type="InterPro" id="IPR040467">
    <property type="entry name" value="CCDC66_dom"/>
</dbReference>
<dbReference type="PANTHER" id="PTHR22736">
    <property type="entry name" value="COILED-COIL DOMAIN-CONTAINING PROTEIN 66"/>
    <property type="match status" value="1"/>
</dbReference>
<dbReference type="PANTHER" id="PTHR22736:SF2">
    <property type="entry name" value="COILED-COIL DOMAIN-CONTAINING PROTEIN 66"/>
    <property type="match status" value="1"/>
</dbReference>
<dbReference type="Pfam" id="PF15236">
    <property type="entry name" value="CCDC66"/>
    <property type="match status" value="1"/>
</dbReference>
<sequence>MGSKNKIAKCPIRTKQTGYILKSTQNTCIRSGKLLQKKRMGSETSLAKGEKSSMIFSPTKDLCKQYVDKDCLYVQKEISPATPTIQKTRNTINTSVVAKQKHCKKHITAENTKSGLVCLTQDQLQQILMTVNQGNKSISAIENGKEETSQDSLHLNNTSNQPKDENIMGFQKNEALSSVLDENKSTLNKNQETSKQYEQKIAIENVWKPADIFSTLGERERDRSLLEAKKAQWKKELDEQVALKKKEKEASEKWNNPWKKFESDKIVWEKFQTLGQSKTSLSSSNILSQSPSQITVVQADDYPLCRASQILEETVPLERPLSTVKQEQQRKWIEDLNKQIEDDRQRKIEEKITSSKGEEHDRWAMHFDSLKNYPASQSQLSSRSIHNQPEYFCVSPDTQELSDISNVYTPTTGSQVEPSEEEHIAKPVRDMAMANSQKTNFLRSMTALLDPAQIEERDRRRQKQLEHQKAITAQVEEKRRKKQLEEQQRKKEEQEEERRLAREREEMQKQYEEDILKQKQKEEIMTLKTNELFQTMQRAQELAQRLKQEQRIRELAQKGHDTSGLIKNLGGYGLDDVSGKMNTCINSTTSPKKDTAVQTDDLNTGMFTIAESCCGSIIEREILNCSSPEIPAEFNDQFKKDKQELINQDKAANLEKENSWYNDQYEFARTEKKHMKKCPKRPDWNINKPLKRYIPASEKYPKQLQKQREEKKVRRQMELLNLVERNNPGHLSQNRGTSPVLPSPQEAEARFRWHLIRKEEPLKSDSFSKKKKNRSQSPLELVKNRTQQTQTLKNRENLILGDSQTETSPGASEPSHFIPYVRTNEIYHLDPDAPLSRPLTQDLQYQNPHDCDQEQWQLFESDVRDPLLNPNLVKNRDRQQAILKGLSELRQGLLQKQRELETNLMPLAANQEENFNSSF</sequence>
<proteinExistence type="evidence at protein level"/>
<evidence type="ECO:0000250" key="1">
    <source>
        <dbReference type="UniProtKB" id="A2RUB6"/>
    </source>
</evidence>
<evidence type="ECO:0000250" key="2">
    <source>
        <dbReference type="UniProtKB" id="Q6NS45"/>
    </source>
</evidence>
<evidence type="ECO:0000255" key="3"/>
<evidence type="ECO:0000256" key="4">
    <source>
        <dbReference type="SAM" id="MobiDB-lite"/>
    </source>
</evidence>
<evidence type="ECO:0000269" key="5">
    <source>
    </source>
</evidence>
<evidence type="ECO:0000305" key="6"/>
<name>CCD66_CANLF</name>
<organism>
    <name type="scientific">Canis lupus familiaris</name>
    <name type="common">Dog</name>
    <name type="synonym">Canis familiaris</name>
    <dbReference type="NCBI Taxonomy" id="9615"/>
    <lineage>
        <taxon>Eukaryota</taxon>
        <taxon>Metazoa</taxon>
        <taxon>Chordata</taxon>
        <taxon>Craniata</taxon>
        <taxon>Vertebrata</taxon>
        <taxon>Euteleostomi</taxon>
        <taxon>Mammalia</taxon>
        <taxon>Eutheria</taxon>
        <taxon>Laurasiatheria</taxon>
        <taxon>Carnivora</taxon>
        <taxon>Caniformia</taxon>
        <taxon>Canidae</taxon>
        <taxon>Canis</taxon>
    </lineage>
</organism>